<comment type="function">
    <text evidence="1">This is one of the proteins that bind and probably mediate the attachment of the 5S RNA into the large ribosomal subunit, where it forms part of the central protuberance. In the 70S ribosome it contacts protein S13 of the 30S subunit (bridge B1b), connecting the 2 subunits; this bridge is implicated in subunit movement. Contacts the P site tRNA; the 5S rRNA and some of its associated proteins might help stabilize positioning of ribosome-bound tRNAs.</text>
</comment>
<comment type="subunit">
    <text evidence="1">Part of the 50S ribosomal subunit; part of the 5S rRNA/L5/L18/L25 subcomplex. Contacts the 5S rRNA and the P site tRNA. Forms a bridge to the 30S subunit in the 70S ribosome.</text>
</comment>
<comment type="similarity">
    <text evidence="1">Belongs to the universal ribosomal protein uL5 family.</text>
</comment>
<proteinExistence type="inferred from homology"/>
<dbReference type="EMBL" id="AP009351">
    <property type="protein sequence ID" value="BAF68412.1"/>
    <property type="molecule type" value="Genomic_DNA"/>
</dbReference>
<dbReference type="RefSeq" id="WP_001080824.1">
    <property type="nucleotide sequence ID" value="NZ_JBBIAE010000006.1"/>
</dbReference>
<dbReference type="SMR" id="A6QJ80"/>
<dbReference type="KEGG" id="sae:NWMN_2140"/>
<dbReference type="HOGENOM" id="CLU_061015_2_1_9"/>
<dbReference type="Proteomes" id="UP000006386">
    <property type="component" value="Chromosome"/>
</dbReference>
<dbReference type="GO" id="GO:1990904">
    <property type="term" value="C:ribonucleoprotein complex"/>
    <property type="evidence" value="ECO:0007669"/>
    <property type="project" value="UniProtKB-KW"/>
</dbReference>
<dbReference type="GO" id="GO:0005840">
    <property type="term" value="C:ribosome"/>
    <property type="evidence" value="ECO:0007669"/>
    <property type="project" value="UniProtKB-KW"/>
</dbReference>
<dbReference type="GO" id="GO:0019843">
    <property type="term" value="F:rRNA binding"/>
    <property type="evidence" value="ECO:0007669"/>
    <property type="project" value="UniProtKB-UniRule"/>
</dbReference>
<dbReference type="GO" id="GO:0003735">
    <property type="term" value="F:structural constituent of ribosome"/>
    <property type="evidence" value="ECO:0007669"/>
    <property type="project" value="InterPro"/>
</dbReference>
<dbReference type="GO" id="GO:0000049">
    <property type="term" value="F:tRNA binding"/>
    <property type="evidence" value="ECO:0007669"/>
    <property type="project" value="UniProtKB-UniRule"/>
</dbReference>
<dbReference type="GO" id="GO:0006412">
    <property type="term" value="P:translation"/>
    <property type="evidence" value="ECO:0007669"/>
    <property type="project" value="UniProtKB-UniRule"/>
</dbReference>
<dbReference type="FunFam" id="3.30.1440.10:FF:000001">
    <property type="entry name" value="50S ribosomal protein L5"/>
    <property type="match status" value="1"/>
</dbReference>
<dbReference type="Gene3D" id="3.30.1440.10">
    <property type="match status" value="1"/>
</dbReference>
<dbReference type="HAMAP" id="MF_01333_B">
    <property type="entry name" value="Ribosomal_uL5_B"/>
    <property type="match status" value="1"/>
</dbReference>
<dbReference type="InterPro" id="IPR002132">
    <property type="entry name" value="Ribosomal_uL5"/>
</dbReference>
<dbReference type="InterPro" id="IPR020930">
    <property type="entry name" value="Ribosomal_uL5_bac-type"/>
</dbReference>
<dbReference type="InterPro" id="IPR031309">
    <property type="entry name" value="Ribosomal_uL5_C"/>
</dbReference>
<dbReference type="InterPro" id="IPR020929">
    <property type="entry name" value="Ribosomal_uL5_CS"/>
</dbReference>
<dbReference type="InterPro" id="IPR022803">
    <property type="entry name" value="Ribosomal_uL5_dom_sf"/>
</dbReference>
<dbReference type="InterPro" id="IPR031310">
    <property type="entry name" value="Ribosomal_uL5_N"/>
</dbReference>
<dbReference type="NCBIfam" id="NF000585">
    <property type="entry name" value="PRK00010.1"/>
    <property type="match status" value="1"/>
</dbReference>
<dbReference type="PANTHER" id="PTHR11994">
    <property type="entry name" value="60S RIBOSOMAL PROTEIN L11-RELATED"/>
    <property type="match status" value="1"/>
</dbReference>
<dbReference type="Pfam" id="PF00281">
    <property type="entry name" value="Ribosomal_L5"/>
    <property type="match status" value="1"/>
</dbReference>
<dbReference type="Pfam" id="PF00673">
    <property type="entry name" value="Ribosomal_L5_C"/>
    <property type="match status" value="1"/>
</dbReference>
<dbReference type="PIRSF" id="PIRSF002161">
    <property type="entry name" value="Ribosomal_L5"/>
    <property type="match status" value="1"/>
</dbReference>
<dbReference type="SUPFAM" id="SSF55282">
    <property type="entry name" value="RL5-like"/>
    <property type="match status" value="1"/>
</dbReference>
<dbReference type="PROSITE" id="PS00358">
    <property type="entry name" value="RIBOSOMAL_L5"/>
    <property type="match status" value="1"/>
</dbReference>
<keyword id="KW-0687">Ribonucleoprotein</keyword>
<keyword id="KW-0689">Ribosomal protein</keyword>
<keyword id="KW-0694">RNA-binding</keyword>
<keyword id="KW-0699">rRNA-binding</keyword>
<keyword id="KW-0820">tRNA-binding</keyword>
<protein>
    <recommendedName>
        <fullName evidence="1">Large ribosomal subunit protein uL5</fullName>
    </recommendedName>
    <alternativeName>
        <fullName evidence="2">50S ribosomal protein L5</fullName>
    </alternativeName>
</protein>
<reference key="1">
    <citation type="journal article" date="2008" name="J. Bacteriol.">
        <title>Genome sequence of Staphylococcus aureus strain Newman and comparative analysis of staphylococcal genomes: polymorphism and evolution of two major pathogenicity islands.</title>
        <authorList>
            <person name="Baba T."/>
            <person name="Bae T."/>
            <person name="Schneewind O."/>
            <person name="Takeuchi F."/>
            <person name="Hiramatsu K."/>
        </authorList>
    </citation>
    <scope>NUCLEOTIDE SEQUENCE [LARGE SCALE GENOMIC DNA]</scope>
    <source>
        <strain>Newman</strain>
    </source>
</reference>
<evidence type="ECO:0000255" key="1">
    <source>
        <dbReference type="HAMAP-Rule" id="MF_01333"/>
    </source>
</evidence>
<evidence type="ECO:0000305" key="2"/>
<feature type="chain" id="PRO_1000073292" description="Large ribosomal subunit protein uL5">
    <location>
        <begin position="1"/>
        <end position="179"/>
    </location>
</feature>
<sequence>MNRLKEKFNTEVTENLMKKFNYSSVMEVPKIDKIVVNMGVGDAVQNSKVLDNAVEELELITGQKPLVTKAKKSIATFRLREGMPIGAKVTLRGERMYEFLDKLISVSLPRVRDFQGVSKKAFDGRGNYTLGVKEQLIFPEIDYDKVSKVRGMDIVIVTTANTDEEARELLANFGMPFRK</sequence>
<accession>A6QJ80</accession>
<gene>
    <name evidence="1" type="primary">rplE</name>
    <name type="ordered locus">NWMN_2140</name>
</gene>
<organism>
    <name type="scientific">Staphylococcus aureus (strain Newman)</name>
    <dbReference type="NCBI Taxonomy" id="426430"/>
    <lineage>
        <taxon>Bacteria</taxon>
        <taxon>Bacillati</taxon>
        <taxon>Bacillota</taxon>
        <taxon>Bacilli</taxon>
        <taxon>Bacillales</taxon>
        <taxon>Staphylococcaceae</taxon>
        <taxon>Staphylococcus</taxon>
    </lineage>
</organism>
<name>RL5_STAAE</name>